<sequence>ASAAVSAAPTEKEFPKTHSDVSSEQQNLKGQKGSNGGSMKLHTTDQSTFDIWRKKLQDLEFSSESPSKETSDSPWRSDILIDENCLLSPLAGEDDSFLLEGSSNEDCKPLLLPDAKPKIKDNGDLILPSPNSVPLPQVKTEKEDFIELCTPGVIKQEKLGPVYCQASFPGANIIGNKMSAISVHGVSTSGGQMYHYDMNTASLSQQQDQKPIFKVIPPIPVGSENWNRCQGSGDDSLTSLGTLNFSGRSVFSNGYSSPGMRPDVSSPPSSSSAATGPPPKLCLVCSDEASGCHYGVLTCGSCKVFFKRAVEGQH</sequence>
<organism>
    <name type="scientific">Ovis aries</name>
    <name type="common">Sheep</name>
    <dbReference type="NCBI Taxonomy" id="9940"/>
    <lineage>
        <taxon>Eukaryota</taxon>
        <taxon>Metazoa</taxon>
        <taxon>Chordata</taxon>
        <taxon>Craniata</taxon>
        <taxon>Vertebrata</taxon>
        <taxon>Euteleostomi</taxon>
        <taxon>Mammalia</taxon>
        <taxon>Eutheria</taxon>
        <taxon>Laurasiatheria</taxon>
        <taxon>Artiodactyla</taxon>
        <taxon>Ruminantia</taxon>
        <taxon>Pecora</taxon>
        <taxon>Bovidae</taxon>
        <taxon>Caprinae</taxon>
        <taxon>Ovis</taxon>
    </lineage>
</organism>
<gene>
    <name type="primary">NR3C1</name>
    <name type="synonym">GRL</name>
</gene>
<accession>P35547</accession>
<proteinExistence type="evidence at transcript level"/>
<protein>
    <recommendedName>
        <fullName>Glucocorticoid receptor</fullName>
        <shortName>GR</shortName>
    </recommendedName>
    <alternativeName>
        <fullName>Nuclear receptor subfamily 3 group C member 1</fullName>
    </alternativeName>
</protein>
<comment type="function">
    <text evidence="2 4">Receptor for glucocorticoids (GC). Has a dual mode of action: as a transcription factor that binds to glucocorticoid response elements (GRE), both for nuclear and mitochondrial DNA, and as a modulator of other transcription factors. Affects inflammatory responses, cellular proliferation and differentiation in target tissues. Involved in chromatin remodeling. Plays a role in rapid mRNA degradation by binding to the 5' UTR of target mRNAs and interacting with PNRC2 in a ligand-dependent manner which recruits the RNA helicase UPF1 and the mRNA-decapping enzyme DCP1A, leading to RNA decay. Could act as a coactivator for STAT5-dependent transcription upon growth hormone (GH) stimulation and could reveal an essential role of hepatic GR in the control of body growth. Mediates glucocorticoid-induced apoptosis. Promotes accurate chromosome segregation during mitosis. May act as a tumor suppressor. May play a negative role in adipogenesis through the regulation of lipolytic and antilipogenic gene expression.</text>
</comment>
<comment type="subunit">
    <text evidence="2 3 4">Heteromultimeric cytoplasmic complex with HSP90AA1, HSPA1A/HSPA1B, and FKBP5 or another immunophilin such as PPID, STIP1, or the immunophilin homolog PPP5C. Upon ligand binding FKBP5 dissociates from the complex and FKBP4 takes its place, thereby linking the complex to dynein and mediating transport to the nucleus, where the complex dissociates. Probably forms a complex composed of chaperones HSP90 and HSP70, co-chaperones CDC37, PPP5C, TSC1 and client protein TSC2, CDK4, AKT, RAF1 and NR3C1; this complex does not contain co-chaperones STIP1/HOP and PTGES3/p23. Directly interacts with UNC45A. Binds to DNA as a homodimer, and as heterodimer with NR3C2 or the retinoid X receptor. Binds STAT5A and STAT5B homodimers and heterodimers. Interacts with NRIP1, POU2F1, POU2F2 and TRIM28. Interacts with several coactivator complexes, including the SMARCA4 complex, CREBBP/EP300, TADA2L (Ada complex) and p160 coactivators such as NCOA2 and NCOA6. Interaction with BAG1 inhibits transactivation. Interacts with HEXIM1 and TGFB1I1. Interacts with NCOA1. Interacts with NCOA3, SMARCA4, SMARCC1, SMARCD1, and SMARCE1. Interacts with CLOCK, CRY1 and CRY2 in a ligand-dependent fashion. Interacts with CIART. Interacts with RWDD3. Interacts with UBE2I/UBC9 and this interaction is enhanced in the presence of RWDD3. Interacts with GRIP1. Interacts with NR4A3 (via nuclear receptor DNA-binding domain), represses transcription activity of NR4A3 on the POMC promoter Nur response element (NurRE). Directly interacts with PNRC2 to attract and form a complex with UPF1 and DCP1A; the interaction leads to rapid mRNA degradation. Interacts with GSK3B. Interacts with FNIP1 and FNIP2. Interacts (via C-terminus) with HNRNPU (via C-terminus). Interacts with MCM3AP (By similarity). Interacts (via domain NR LBD) with HSP90AA1 and HSP90AB1 (By similarity). In the absence of hormonal ligand, interacts with TACC1 (By similarity). Interacts (via NR LBD domain) with ZNF764 (via KRAB domain); the interaction regulates transcription factor activity of NR3C1 by directing its actions toward certain biologic pathways (By similarity).</text>
</comment>
<comment type="subcellular location">
    <subcellularLocation>
        <location evidence="2">Cytoplasm</location>
    </subcellularLocation>
    <subcellularLocation>
        <location evidence="2">Nucleus</location>
    </subcellularLocation>
    <subcellularLocation>
        <location evidence="2">Mitochondrion</location>
    </subcellularLocation>
    <subcellularLocation>
        <location evidence="2">Cytoplasm</location>
        <location evidence="2">Cytoskeleton</location>
        <location evidence="2">Spindle</location>
    </subcellularLocation>
    <subcellularLocation>
        <location evidence="2">Cytoplasm</location>
        <location evidence="2">Cytoskeleton</location>
        <location evidence="2">Microtubule organizing center</location>
        <location evidence="2">Centrosome</location>
    </subcellularLocation>
    <subcellularLocation>
        <location evidence="4">Chromosome</location>
    </subcellularLocation>
    <subcellularLocation>
        <location evidence="4">Nucleus</location>
        <location evidence="4">Nucleoplasm</location>
    </subcellularLocation>
    <text evidence="2 4">After ligand activation, translocates from the cytoplasm to the nucleus (By similarity). The hormone-occupied receptor undergoes rapid exchange between chromatin and the nucleoplasmic compartment. In the presence of NR1D1 shows a time-dependent subcellular localization, localizing to the cytoplasm at ZT8 and to the nucleus at ZT20. Lacks this diurnal pattern of localization in the absence of NR1D1, localizing to both nucleus and the cytoplasm at ZT8 and ZT20. Upon dexamethasone binding associates with the glucocorticoid response elements of target genes (By similarity).</text>
</comment>
<comment type="developmental stage">
    <text evidence="7">Detected in hypothalamus, anterior pituitary gland and adrenals in fetuses at days 60-70, 100-110, 125-130. In newborn, levels increased significantly in the hypothalamus and pituitary gland but decreased to undetectable levels in the adrenal.</text>
</comment>
<comment type="domain">
    <text evidence="2">Composed of three domains: a modulating N-terminal domain, a DNA-binding domain and a C-terminal ligand-binding domain. The ligand-binding domain is required for correct chromosome segregation during mitosis although ligand binding is not required.</text>
</comment>
<comment type="PTM">
    <text evidence="1">Acetylation by CLOCK reduces its binding to glucocorticoid response elements and its transcriptional activity.</text>
</comment>
<comment type="PTM">
    <text evidence="2">Increased proteasome-mediated degradation in response to glucocorticoids.</text>
</comment>
<comment type="PTM">
    <text evidence="2 4">Phosphorylated in the absence of hormone; becomes hyperphosphorylated in the presence of glucocorticoid. The Ser-65, Ser-88 and Ser-266-phosphorylated forms are mainly cytoplasmic, and the Ser-73-phosphorylated form is nuclear. Phosphorylation at Ser-73 increases transcriptional activity. Phosphorylation at Ser-65, Ser-88 and Ser-266 decreases signaling capacity. Phosphorylation at Ser-266 may protect from glucocorticoid-induced apoptosis. Phosphorylation at Ser-65 and Ser-73 is not required in regulation of chromosome segregation. May be dephosphorylated by PPP5C, attenuates NR3C1 action.</text>
</comment>
<comment type="PTM">
    <text evidence="4">Ubiquitinated by UBR5, leading to its degradation: UBR5 specifically recognizes and binds ligand-bound NR3C1 when it is not associated with coactivators (NCOAs) (By similarity). In presence of NCOAs, the UBR5-degron is not accessible, preventing its ubiquitination and degradation (By similarity).</text>
</comment>
<comment type="PTM">
    <text evidence="3">Sumoylation at Lys-139 and Lys-155 negatively regulates its transcriptional activity. Heat shock increases sumoylation in a RWDD3-dependent manner.</text>
</comment>
<comment type="similarity">
    <text evidence="8">Belongs to the nuclear hormone receptor family. NR3 subfamily.</text>
</comment>
<keyword id="KW-0156">Chromatin regulator</keyword>
<keyword id="KW-0158">Chromosome</keyword>
<keyword id="KW-0963">Cytoplasm</keyword>
<keyword id="KW-0206">Cytoskeleton</keyword>
<keyword id="KW-0238">DNA-binding</keyword>
<keyword id="KW-1017">Isopeptide bond</keyword>
<keyword id="KW-0446">Lipid-binding</keyword>
<keyword id="KW-0479">Metal-binding</keyword>
<keyword id="KW-0496">Mitochondrion</keyword>
<keyword id="KW-0539">Nucleus</keyword>
<keyword id="KW-0597">Phosphoprotein</keyword>
<keyword id="KW-0675">Receptor</keyword>
<keyword id="KW-1185">Reference proteome</keyword>
<keyword id="KW-0754">Steroid-binding</keyword>
<keyword id="KW-0804">Transcription</keyword>
<keyword id="KW-0805">Transcription regulation</keyword>
<keyword id="KW-0832">Ubl conjugation</keyword>
<keyword id="KW-0862">Zinc</keyword>
<keyword id="KW-0863">Zinc-finger</keyword>
<reference key="1">
    <citation type="journal article" date="1992" name="J. Mol. Endocrinol.">
        <title>Characterization of an ovine glucocorticoid receptor cDNA and developmental changes in its mRNA levels in the fetal sheep hypothalamus, pituitary gland and adrenal.</title>
        <authorList>
            <person name="Yang K."/>
            <person name="Hammond G.L."/>
            <person name="Challis J.R."/>
        </authorList>
    </citation>
    <scope>NUCLEOTIDE SEQUENCE [MRNA]</scope>
    <scope>DEVELOPMENTAL STAGE</scope>
    <source>
        <tissue>Liver</tissue>
    </source>
</reference>
<evidence type="ECO:0000250" key="1"/>
<evidence type="ECO:0000250" key="2">
    <source>
        <dbReference type="UniProtKB" id="P04150"/>
    </source>
</evidence>
<evidence type="ECO:0000250" key="3">
    <source>
        <dbReference type="UniProtKB" id="P06536"/>
    </source>
</evidence>
<evidence type="ECO:0000250" key="4">
    <source>
        <dbReference type="UniProtKB" id="P06537"/>
    </source>
</evidence>
<evidence type="ECO:0000255" key="5">
    <source>
        <dbReference type="PROSITE-ProRule" id="PRU00407"/>
    </source>
</evidence>
<evidence type="ECO:0000256" key="6">
    <source>
        <dbReference type="SAM" id="MobiDB-lite"/>
    </source>
</evidence>
<evidence type="ECO:0000269" key="7">
    <source>
    </source>
</evidence>
<evidence type="ECO:0000305" key="8"/>
<name>GCR_SHEEP</name>
<feature type="chain" id="PRO_0000053677" description="Glucocorticoid receptor">
    <location>
        <begin position="1" status="less than"/>
        <end position="314" status="greater than"/>
    </location>
</feature>
<feature type="zinc finger region" description="NR C4-type" evidence="5">
    <location>
        <begin position="282"/>
        <end position="314" status="greater than"/>
    </location>
</feature>
<feature type="DNA-binding region" description="Nuclear receptor" evidence="5">
    <location>
        <begin position="282"/>
        <end position="314" status="greater than"/>
    </location>
</feature>
<feature type="region of interest" description="Modulating">
    <location>
        <begin position="1" status="less than"/>
        <end position="281"/>
    </location>
</feature>
<feature type="region of interest" description="Disordered" evidence="6">
    <location>
        <begin position="1"/>
        <end position="44"/>
    </location>
</feature>
<feature type="compositionally biased region" description="Basic and acidic residues" evidence="6">
    <location>
        <begin position="10"/>
        <end position="21"/>
    </location>
</feature>
<feature type="modified residue" description="Phosphoserine" evidence="2">
    <location>
        <position position="65"/>
    </location>
</feature>
<feature type="modified residue" description="Phosphoserine" evidence="2">
    <location>
        <position position="73"/>
    </location>
</feature>
<feature type="modified residue" description="Phosphoserine" evidence="2">
    <location>
        <position position="88"/>
    </location>
</feature>
<feature type="modified residue" description="Phosphoserine" evidence="2">
    <location>
        <position position="129"/>
    </location>
</feature>
<feature type="modified residue" description="Phosphoserine" evidence="2">
    <location>
        <position position="266"/>
    </location>
</feature>
<feature type="cross-link" description="Glycyl lysine isopeptide (Lys-Gly) (interchain with G-Cter in SUMO2)" evidence="2">
    <location>
        <position position="120"/>
    </location>
</feature>
<feature type="cross-link" description="Glycyl lysine isopeptide (Lys-Gly) (interchain with G-Cter in SUMO); alternate" evidence="2">
    <location>
        <position position="139"/>
    </location>
</feature>
<feature type="cross-link" description="Glycyl lysine isopeptide (Lys-Gly) (interchain with G-Cter in SUMO2); alternate" evidence="2">
    <location>
        <position position="139"/>
    </location>
</feature>
<feature type="cross-link" description="Glycyl lysine isopeptide (Lys-Gly) (interchain with G-Cter in SUMO); alternate" evidence="2">
    <location>
        <position position="155"/>
    </location>
</feature>
<feature type="cross-link" description="Glycyl lysine isopeptide (Lys-Gly) (interchain with G-Cter in SUMO2); alternate" evidence="2">
    <location>
        <position position="155"/>
    </location>
</feature>
<feature type="cross-link" description="Glycyl lysine isopeptide (Lys-Gly) (interchain with G-Cter in ubiquitin)" evidence="4">
    <location>
        <position position="280"/>
    </location>
</feature>
<feature type="non-terminal residue">
    <location>
        <position position="1"/>
    </location>
</feature>
<feature type="non-terminal residue">
    <location>
        <position position="314"/>
    </location>
</feature>
<dbReference type="EMBL" id="X70407">
    <property type="protein sequence ID" value="CAA49851.1"/>
    <property type="molecule type" value="mRNA"/>
</dbReference>
<dbReference type="EMBL" id="S44554">
    <property type="protein sequence ID" value="AAB23141.1"/>
    <property type="molecule type" value="mRNA"/>
</dbReference>
<dbReference type="PIR" id="S31868">
    <property type="entry name" value="S31868"/>
</dbReference>
<dbReference type="SMR" id="P35547"/>
<dbReference type="STRING" id="9940.ENSOARP00000002152"/>
<dbReference type="PaxDb" id="9940-ENSOARP00000002152"/>
<dbReference type="eggNOG" id="KOG3575">
    <property type="taxonomic scope" value="Eukaryota"/>
</dbReference>
<dbReference type="Proteomes" id="UP000002356">
    <property type="component" value="Unplaced"/>
</dbReference>
<dbReference type="GO" id="GO:0005813">
    <property type="term" value="C:centrosome"/>
    <property type="evidence" value="ECO:0007669"/>
    <property type="project" value="UniProtKB-SubCell"/>
</dbReference>
<dbReference type="GO" id="GO:0005694">
    <property type="term" value="C:chromosome"/>
    <property type="evidence" value="ECO:0007669"/>
    <property type="project" value="UniProtKB-SubCell"/>
</dbReference>
<dbReference type="GO" id="GO:0005737">
    <property type="term" value="C:cytoplasm"/>
    <property type="evidence" value="ECO:0000250"/>
    <property type="project" value="UniProtKB"/>
</dbReference>
<dbReference type="GO" id="GO:0005739">
    <property type="term" value="C:mitochondrion"/>
    <property type="evidence" value="ECO:0007669"/>
    <property type="project" value="UniProtKB-SubCell"/>
</dbReference>
<dbReference type="GO" id="GO:0016607">
    <property type="term" value="C:nuclear speck"/>
    <property type="evidence" value="ECO:0000250"/>
    <property type="project" value="UniProtKB"/>
</dbReference>
<dbReference type="GO" id="GO:0005634">
    <property type="term" value="C:nucleus"/>
    <property type="evidence" value="ECO:0000250"/>
    <property type="project" value="UniProtKB"/>
</dbReference>
<dbReference type="GO" id="GO:0005819">
    <property type="term" value="C:spindle"/>
    <property type="evidence" value="ECO:0007669"/>
    <property type="project" value="UniProtKB-SubCell"/>
</dbReference>
<dbReference type="GO" id="GO:0003700">
    <property type="term" value="F:DNA-binding transcription factor activity"/>
    <property type="evidence" value="ECO:0000250"/>
    <property type="project" value="UniProtKB"/>
</dbReference>
<dbReference type="GO" id="GO:0004883">
    <property type="term" value="F:nuclear glucocorticoid receptor activity"/>
    <property type="evidence" value="ECO:0007669"/>
    <property type="project" value="InterPro"/>
</dbReference>
<dbReference type="GO" id="GO:0004879">
    <property type="term" value="F:nuclear receptor activity"/>
    <property type="evidence" value="ECO:0000250"/>
    <property type="project" value="UniProtKB"/>
</dbReference>
<dbReference type="GO" id="GO:0043565">
    <property type="term" value="F:sequence-specific DNA binding"/>
    <property type="evidence" value="ECO:0007669"/>
    <property type="project" value="InterPro"/>
</dbReference>
<dbReference type="GO" id="GO:0005496">
    <property type="term" value="F:steroid binding"/>
    <property type="evidence" value="ECO:0000250"/>
    <property type="project" value="UniProtKB"/>
</dbReference>
<dbReference type="GO" id="GO:1990239">
    <property type="term" value="F:steroid hormone binding"/>
    <property type="evidence" value="ECO:0000250"/>
    <property type="project" value="UniProtKB"/>
</dbReference>
<dbReference type="GO" id="GO:0008270">
    <property type="term" value="F:zinc ion binding"/>
    <property type="evidence" value="ECO:0007669"/>
    <property type="project" value="UniProtKB-KW"/>
</dbReference>
<dbReference type="GO" id="GO:0071385">
    <property type="term" value="P:cellular response to glucocorticoid stimulus"/>
    <property type="evidence" value="ECO:0000250"/>
    <property type="project" value="UniProtKB"/>
</dbReference>
<dbReference type="GO" id="GO:0071383">
    <property type="term" value="P:cellular response to steroid hormone stimulus"/>
    <property type="evidence" value="ECO:0000250"/>
    <property type="project" value="UniProtKB"/>
</dbReference>
<dbReference type="GO" id="GO:0006325">
    <property type="term" value="P:chromatin organization"/>
    <property type="evidence" value="ECO:0007669"/>
    <property type="project" value="UniProtKB-KW"/>
</dbReference>
<dbReference type="GO" id="GO:0045944">
    <property type="term" value="P:positive regulation of transcription by RNA polymerase II"/>
    <property type="evidence" value="ECO:0000250"/>
    <property type="project" value="UniProtKB"/>
</dbReference>
<dbReference type="Gene3D" id="3.30.50.10">
    <property type="entry name" value="Erythroid Transcription Factor GATA-1, subunit A"/>
    <property type="match status" value="1"/>
</dbReference>
<dbReference type="InterPro" id="IPR001409">
    <property type="entry name" value="Glcrtcd_rcpt"/>
</dbReference>
<dbReference type="InterPro" id="IPR050200">
    <property type="entry name" value="Nuclear_hormone_rcpt_NR3"/>
</dbReference>
<dbReference type="InterPro" id="IPR001628">
    <property type="entry name" value="Znf_hrmn_rcpt"/>
</dbReference>
<dbReference type="InterPro" id="IPR013088">
    <property type="entry name" value="Znf_NHR/GATA"/>
</dbReference>
<dbReference type="PANTHER" id="PTHR48092">
    <property type="entry name" value="KNIRPS-RELATED PROTEIN-RELATED"/>
    <property type="match status" value="1"/>
</dbReference>
<dbReference type="Pfam" id="PF02155">
    <property type="entry name" value="GCR"/>
    <property type="match status" value="1"/>
</dbReference>
<dbReference type="Pfam" id="PF00105">
    <property type="entry name" value="zf-C4"/>
    <property type="match status" value="1"/>
</dbReference>
<dbReference type="PRINTS" id="PR00047">
    <property type="entry name" value="STROIDFINGER"/>
</dbReference>
<dbReference type="SMART" id="SM00399">
    <property type="entry name" value="ZnF_C4"/>
    <property type="match status" value="1"/>
</dbReference>
<dbReference type="SUPFAM" id="SSF57716">
    <property type="entry name" value="Glucocorticoid receptor-like (DNA-binding domain)"/>
    <property type="match status" value="1"/>
</dbReference>
<dbReference type="PROSITE" id="PS00031">
    <property type="entry name" value="NUCLEAR_REC_DBD_1"/>
    <property type="match status" value="1"/>
</dbReference>
<dbReference type="PROSITE" id="PS51030">
    <property type="entry name" value="NUCLEAR_REC_DBD_2"/>
    <property type="match status" value="1"/>
</dbReference>